<evidence type="ECO:0000255" key="1">
    <source>
        <dbReference type="HAMAP-Rule" id="MF_00384"/>
    </source>
</evidence>
<dbReference type="EC" id="2.7.1.39" evidence="1"/>
<dbReference type="EMBL" id="BX571860">
    <property type="protein sequence ID" value="CAE12859.1"/>
    <property type="molecule type" value="Genomic_DNA"/>
</dbReference>
<dbReference type="RefSeq" id="WP_011144946.1">
    <property type="nucleotide sequence ID" value="NC_005126.1"/>
</dbReference>
<dbReference type="SMR" id="Q7N8Z5"/>
<dbReference type="STRING" id="243265.plu0564"/>
<dbReference type="GeneID" id="48846851"/>
<dbReference type="KEGG" id="plu:plu0564"/>
<dbReference type="eggNOG" id="COG0083">
    <property type="taxonomic scope" value="Bacteria"/>
</dbReference>
<dbReference type="HOGENOM" id="CLU_041243_1_1_6"/>
<dbReference type="OrthoDB" id="9769912at2"/>
<dbReference type="UniPathway" id="UPA00050">
    <property type="reaction ID" value="UER00064"/>
</dbReference>
<dbReference type="Proteomes" id="UP000002514">
    <property type="component" value="Chromosome"/>
</dbReference>
<dbReference type="GO" id="GO:0005737">
    <property type="term" value="C:cytoplasm"/>
    <property type="evidence" value="ECO:0007669"/>
    <property type="project" value="UniProtKB-SubCell"/>
</dbReference>
<dbReference type="GO" id="GO:0005524">
    <property type="term" value="F:ATP binding"/>
    <property type="evidence" value="ECO:0007669"/>
    <property type="project" value="UniProtKB-UniRule"/>
</dbReference>
<dbReference type="GO" id="GO:0004413">
    <property type="term" value="F:homoserine kinase activity"/>
    <property type="evidence" value="ECO:0007669"/>
    <property type="project" value="UniProtKB-UniRule"/>
</dbReference>
<dbReference type="GO" id="GO:0009088">
    <property type="term" value="P:threonine biosynthetic process"/>
    <property type="evidence" value="ECO:0007669"/>
    <property type="project" value="UniProtKB-UniRule"/>
</dbReference>
<dbReference type="Gene3D" id="3.30.230.10">
    <property type="match status" value="1"/>
</dbReference>
<dbReference type="Gene3D" id="3.30.70.890">
    <property type="entry name" value="GHMP kinase, C-terminal domain"/>
    <property type="match status" value="1"/>
</dbReference>
<dbReference type="HAMAP" id="MF_00384">
    <property type="entry name" value="Homoser_kinase"/>
    <property type="match status" value="1"/>
</dbReference>
<dbReference type="InterPro" id="IPR013750">
    <property type="entry name" value="GHMP_kinase_C_dom"/>
</dbReference>
<dbReference type="InterPro" id="IPR036554">
    <property type="entry name" value="GHMP_kinase_C_sf"/>
</dbReference>
<dbReference type="InterPro" id="IPR006204">
    <property type="entry name" value="GHMP_kinase_N_dom"/>
</dbReference>
<dbReference type="InterPro" id="IPR006203">
    <property type="entry name" value="GHMP_knse_ATP-bd_CS"/>
</dbReference>
<dbReference type="InterPro" id="IPR000870">
    <property type="entry name" value="Homoserine_kinase"/>
</dbReference>
<dbReference type="InterPro" id="IPR020568">
    <property type="entry name" value="Ribosomal_Su5_D2-typ_SF"/>
</dbReference>
<dbReference type="InterPro" id="IPR014721">
    <property type="entry name" value="Ribsml_uS5_D2-typ_fold_subgr"/>
</dbReference>
<dbReference type="NCBIfam" id="NF002288">
    <property type="entry name" value="PRK01212.1-4"/>
    <property type="match status" value="1"/>
</dbReference>
<dbReference type="NCBIfam" id="TIGR00191">
    <property type="entry name" value="thrB"/>
    <property type="match status" value="1"/>
</dbReference>
<dbReference type="PANTHER" id="PTHR20861:SF1">
    <property type="entry name" value="HOMOSERINE KINASE"/>
    <property type="match status" value="1"/>
</dbReference>
<dbReference type="PANTHER" id="PTHR20861">
    <property type="entry name" value="HOMOSERINE/4-DIPHOSPHOCYTIDYL-2-C-METHYL-D-ERYTHRITOL KINASE"/>
    <property type="match status" value="1"/>
</dbReference>
<dbReference type="Pfam" id="PF08544">
    <property type="entry name" value="GHMP_kinases_C"/>
    <property type="match status" value="1"/>
</dbReference>
<dbReference type="Pfam" id="PF00288">
    <property type="entry name" value="GHMP_kinases_N"/>
    <property type="match status" value="1"/>
</dbReference>
<dbReference type="PIRSF" id="PIRSF000676">
    <property type="entry name" value="Homoser_kin"/>
    <property type="match status" value="1"/>
</dbReference>
<dbReference type="PRINTS" id="PR00958">
    <property type="entry name" value="HOMSERKINASE"/>
</dbReference>
<dbReference type="SUPFAM" id="SSF55060">
    <property type="entry name" value="GHMP Kinase, C-terminal domain"/>
    <property type="match status" value="1"/>
</dbReference>
<dbReference type="SUPFAM" id="SSF54211">
    <property type="entry name" value="Ribosomal protein S5 domain 2-like"/>
    <property type="match status" value="1"/>
</dbReference>
<dbReference type="PROSITE" id="PS00627">
    <property type="entry name" value="GHMP_KINASES_ATP"/>
    <property type="match status" value="1"/>
</dbReference>
<feature type="chain" id="PRO_0000156594" description="Homoserine kinase">
    <location>
        <begin position="1"/>
        <end position="309"/>
    </location>
</feature>
<feature type="binding site" evidence="1">
    <location>
        <begin position="91"/>
        <end position="101"/>
    </location>
    <ligand>
        <name>ATP</name>
        <dbReference type="ChEBI" id="CHEBI:30616"/>
    </ligand>
</feature>
<sequence>MIKVYAPASIGNVSVGFDVLGAAVSPVNGALLGDCVTVRAAKSFSLRNEGQFVGKLPEKLEHNIVYQCWQLFCQHLGKQLPVEMTLEKNMPIGSGLGSSACSVVAGLMALNEFAGLPFNESQLLAMMGELEGRISGSIHYDNVAPCYLGGLQLIMEQGDIICQPVPSFDEWLWVMAYPGIKVSTAEARAILPVKYSKQDVIDHGRFLAGFIHACHTRQPALAARLMKDVVAEPYRTQLLPGFANARETAKRVGALACGISGSGPTLFSICNDIATAEEIAEWLQQHYVQNDEGFVHICRLDLAGARQIG</sequence>
<proteinExistence type="inferred from homology"/>
<reference key="1">
    <citation type="journal article" date="2003" name="Nat. Biotechnol.">
        <title>The genome sequence of the entomopathogenic bacterium Photorhabdus luminescens.</title>
        <authorList>
            <person name="Duchaud E."/>
            <person name="Rusniok C."/>
            <person name="Frangeul L."/>
            <person name="Buchrieser C."/>
            <person name="Givaudan A."/>
            <person name="Taourit S."/>
            <person name="Bocs S."/>
            <person name="Boursaux-Eude C."/>
            <person name="Chandler M."/>
            <person name="Charles J.-F."/>
            <person name="Dassa E."/>
            <person name="Derose R."/>
            <person name="Derzelle S."/>
            <person name="Freyssinet G."/>
            <person name="Gaudriault S."/>
            <person name="Medigue C."/>
            <person name="Lanois A."/>
            <person name="Powell K."/>
            <person name="Siguier P."/>
            <person name="Vincent R."/>
            <person name="Wingate V."/>
            <person name="Zouine M."/>
            <person name="Glaser P."/>
            <person name="Boemare N."/>
            <person name="Danchin A."/>
            <person name="Kunst F."/>
        </authorList>
    </citation>
    <scope>NUCLEOTIDE SEQUENCE [LARGE SCALE GENOMIC DNA]</scope>
    <source>
        <strain>DSM 15139 / CIP 105565 / TT01</strain>
    </source>
</reference>
<comment type="function">
    <text evidence="1">Catalyzes the ATP-dependent phosphorylation of L-homoserine to L-homoserine phosphate.</text>
</comment>
<comment type="catalytic activity">
    <reaction evidence="1">
        <text>L-homoserine + ATP = O-phospho-L-homoserine + ADP + H(+)</text>
        <dbReference type="Rhea" id="RHEA:13985"/>
        <dbReference type="ChEBI" id="CHEBI:15378"/>
        <dbReference type="ChEBI" id="CHEBI:30616"/>
        <dbReference type="ChEBI" id="CHEBI:57476"/>
        <dbReference type="ChEBI" id="CHEBI:57590"/>
        <dbReference type="ChEBI" id="CHEBI:456216"/>
        <dbReference type="EC" id="2.7.1.39"/>
    </reaction>
</comment>
<comment type="pathway">
    <text evidence="1">Amino-acid biosynthesis; L-threonine biosynthesis; L-threonine from L-aspartate: step 4/5.</text>
</comment>
<comment type="subcellular location">
    <subcellularLocation>
        <location evidence="1">Cytoplasm</location>
    </subcellularLocation>
</comment>
<comment type="similarity">
    <text evidence="1">Belongs to the GHMP kinase family. Homoserine kinase subfamily.</text>
</comment>
<gene>
    <name evidence="1" type="primary">thrB</name>
    <name type="ordered locus">plu0564</name>
</gene>
<organism>
    <name type="scientific">Photorhabdus laumondii subsp. laumondii (strain DSM 15139 / CIP 105565 / TT01)</name>
    <name type="common">Photorhabdus luminescens subsp. laumondii</name>
    <dbReference type="NCBI Taxonomy" id="243265"/>
    <lineage>
        <taxon>Bacteria</taxon>
        <taxon>Pseudomonadati</taxon>
        <taxon>Pseudomonadota</taxon>
        <taxon>Gammaproteobacteria</taxon>
        <taxon>Enterobacterales</taxon>
        <taxon>Morganellaceae</taxon>
        <taxon>Photorhabdus</taxon>
    </lineage>
</organism>
<keyword id="KW-0028">Amino-acid biosynthesis</keyword>
<keyword id="KW-0067">ATP-binding</keyword>
<keyword id="KW-0963">Cytoplasm</keyword>
<keyword id="KW-0418">Kinase</keyword>
<keyword id="KW-0547">Nucleotide-binding</keyword>
<keyword id="KW-1185">Reference proteome</keyword>
<keyword id="KW-0791">Threonine biosynthesis</keyword>
<keyword id="KW-0808">Transferase</keyword>
<accession>Q7N8Z5</accession>
<name>KHSE_PHOLL</name>
<protein>
    <recommendedName>
        <fullName evidence="1">Homoserine kinase</fullName>
        <shortName evidence="1">HK</shortName>
        <shortName evidence="1">HSK</shortName>
        <ecNumber evidence="1">2.7.1.39</ecNumber>
    </recommendedName>
</protein>